<sequence>MSLSTEATAKIVSEFGRDANDTGSTEVQVALLTAQINHLQGHFAEHKKDHHSRRGLLRMVSQRRKLLDYLKRKDVARYTRLIERLGLRR</sequence>
<comment type="function">
    <text evidence="1">One of the primary rRNA binding proteins, it binds directly to 16S rRNA where it helps nucleate assembly of the platform of the 30S subunit by binding and bridging several RNA helices of the 16S rRNA.</text>
</comment>
<comment type="function">
    <text evidence="1">Forms an intersubunit bridge (bridge B4) with the 23S rRNA of the 50S subunit in the ribosome.</text>
</comment>
<comment type="subunit">
    <text evidence="1">Part of the 30S ribosomal subunit. Forms a bridge to the 50S subunit in the 70S ribosome, contacting the 23S rRNA.</text>
</comment>
<comment type="similarity">
    <text evidence="1">Belongs to the universal ribosomal protein uS15 family.</text>
</comment>
<evidence type="ECO:0000255" key="1">
    <source>
        <dbReference type="HAMAP-Rule" id="MF_01343"/>
    </source>
</evidence>
<evidence type="ECO:0000305" key="2"/>
<name>RS15_ECO57</name>
<dbReference type="EMBL" id="AE005174">
    <property type="protein sequence ID" value="AAG58301.1"/>
    <property type="molecule type" value="Genomic_DNA"/>
</dbReference>
<dbReference type="EMBL" id="BA000007">
    <property type="protein sequence ID" value="BAB37469.1"/>
    <property type="molecule type" value="Genomic_DNA"/>
</dbReference>
<dbReference type="PIR" id="A85980">
    <property type="entry name" value="A85980"/>
</dbReference>
<dbReference type="PIR" id="F91134">
    <property type="entry name" value="F91134"/>
</dbReference>
<dbReference type="RefSeq" id="NP_312073.1">
    <property type="nucleotide sequence ID" value="NC_002695.1"/>
</dbReference>
<dbReference type="RefSeq" id="WP_000059467.1">
    <property type="nucleotide sequence ID" value="NZ_VOAI01000014.1"/>
</dbReference>
<dbReference type="EMDB" id="EMD-0482"/>
<dbReference type="EMDB" id="EMD-8621"/>
<dbReference type="SMR" id="Q8X9M2"/>
<dbReference type="IntAct" id="Q8X9M2">
    <property type="interactions" value="2"/>
</dbReference>
<dbReference type="STRING" id="155864.Z4526"/>
<dbReference type="GeneID" id="916113"/>
<dbReference type="KEGG" id="ece:Z4526"/>
<dbReference type="KEGG" id="ecs:ECs_4046"/>
<dbReference type="PATRIC" id="fig|386585.9.peg.4225"/>
<dbReference type="eggNOG" id="COG0184">
    <property type="taxonomic scope" value="Bacteria"/>
</dbReference>
<dbReference type="HOGENOM" id="CLU_148518_0_0_6"/>
<dbReference type="OMA" id="RINYLTE"/>
<dbReference type="Proteomes" id="UP000000558">
    <property type="component" value="Chromosome"/>
</dbReference>
<dbReference type="Proteomes" id="UP000002519">
    <property type="component" value="Chromosome"/>
</dbReference>
<dbReference type="GO" id="GO:0022627">
    <property type="term" value="C:cytosolic small ribosomal subunit"/>
    <property type="evidence" value="ECO:0007669"/>
    <property type="project" value="TreeGrafter"/>
</dbReference>
<dbReference type="GO" id="GO:0019843">
    <property type="term" value="F:rRNA binding"/>
    <property type="evidence" value="ECO:0007669"/>
    <property type="project" value="UniProtKB-UniRule"/>
</dbReference>
<dbReference type="GO" id="GO:0003735">
    <property type="term" value="F:structural constituent of ribosome"/>
    <property type="evidence" value="ECO:0007669"/>
    <property type="project" value="InterPro"/>
</dbReference>
<dbReference type="GO" id="GO:0006412">
    <property type="term" value="P:translation"/>
    <property type="evidence" value="ECO:0007669"/>
    <property type="project" value="UniProtKB-UniRule"/>
</dbReference>
<dbReference type="CDD" id="cd00353">
    <property type="entry name" value="Ribosomal_S15p_S13e"/>
    <property type="match status" value="1"/>
</dbReference>
<dbReference type="FunFam" id="1.10.287.10:FF:000002">
    <property type="entry name" value="30S ribosomal protein S15"/>
    <property type="match status" value="1"/>
</dbReference>
<dbReference type="Gene3D" id="6.10.250.3130">
    <property type="match status" value="1"/>
</dbReference>
<dbReference type="Gene3D" id="1.10.287.10">
    <property type="entry name" value="S15/NS1, RNA-binding"/>
    <property type="match status" value="1"/>
</dbReference>
<dbReference type="HAMAP" id="MF_01343_B">
    <property type="entry name" value="Ribosomal_uS15_B"/>
    <property type="match status" value="1"/>
</dbReference>
<dbReference type="InterPro" id="IPR000589">
    <property type="entry name" value="Ribosomal_uS15"/>
</dbReference>
<dbReference type="InterPro" id="IPR005290">
    <property type="entry name" value="Ribosomal_uS15_bac-type"/>
</dbReference>
<dbReference type="InterPro" id="IPR009068">
    <property type="entry name" value="uS15_NS1_RNA-bd_sf"/>
</dbReference>
<dbReference type="NCBIfam" id="TIGR00952">
    <property type="entry name" value="S15_bact"/>
    <property type="match status" value="1"/>
</dbReference>
<dbReference type="PANTHER" id="PTHR23321">
    <property type="entry name" value="RIBOSOMAL PROTEIN S15, BACTERIAL AND ORGANELLAR"/>
    <property type="match status" value="1"/>
</dbReference>
<dbReference type="PANTHER" id="PTHR23321:SF26">
    <property type="entry name" value="SMALL RIBOSOMAL SUBUNIT PROTEIN US15M"/>
    <property type="match status" value="1"/>
</dbReference>
<dbReference type="Pfam" id="PF00312">
    <property type="entry name" value="Ribosomal_S15"/>
    <property type="match status" value="1"/>
</dbReference>
<dbReference type="SMART" id="SM01387">
    <property type="entry name" value="Ribosomal_S15"/>
    <property type="match status" value="1"/>
</dbReference>
<dbReference type="SUPFAM" id="SSF47060">
    <property type="entry name" value="S15/NS1 RNA-binding domain"/>
    <property type="match status" value="1"/>
</dbReference>
<dbReference type="PROSITE" id="PS00362">
    <property type="entry name" value="RIBOSOMAL_S15"/>
    <property type="match status" value="1"/>
</dbReference>
<organism>
    <name type="scientific">Escherichia coli O157:H7</name>
    <dbReference type="NCBI Taxonomy" id="83334"/>
    <lineage>
        <taxon>Bacteria</taxon>
        <taxon>Pseudomonadati</taxon>
        <taxon>Pseudomonadota</taxon>
        <taxon>Gammaproteobacteria</taxon>
        <taxon>Enterobacterales</taxon>
        <taxon>Enterobacteriaceae</taxon>
        <taxon>Escherichia</taxon>
    </lineage>
</organism>
<accession>Q8X9M2</accession>
<accession>Q7AAI3</accession>
<keyword id="KW-1185">Reference proteome</keyword>
<keyword id="KW-0687">Ribonucleoprotein</keyword>
<keyword id="KW-0689">Ribosomal protein</keyword>
<keyword id="KW-0694">RNA-binding</keyword>
<keyword id="KW-0699">rRNA-binding</keyword>
<protein>
    <recommendedName>
        <fullName evidence="1">Small ribosomal subunit protein uS15</fullName>
    </recommendedName>
    <alternativeName>
        <fullName evidence="2">30S ribosomal protein S15</fullName>
    </alternativeName>
</protein>
<feature type="chain" id="PRO_0000115438" description="Small ribosomal subunit protein uS15">
    <location>
        <begin position="1"/>
        <end position="89"/>
    </location>
</feature>
<gene>
    <name evidence="1" type="primary">rpsO</name>
    <name type="ordered locus">Z4526</name>
    <name type="ordered locus">ECs4046</name>
</gene>
<proteinExistence type="inferred from homology"/>
<reference key="1">
    <citation type="journal article" date="2001" name="Nature">
        <title>Genome sequence of enterohaemorrhagic Escherichia coli O157:H7.</title>
        <authorList>
            <person name="Perna N.T."/>
            <person name="Plunkett G. III"/>
            <person name="Burland V."/>
            <person name="Mau B."/>
            <person name="Glasner J.D."/>
            <person name="Rose D.J."/>
            <person name="Mayhew G.F."/>
            <person name="Evans P.S."/>
            <person name="Gregor J."/>
            <person name="Kirkpatrick H.A."/>
            <person name="Posfai G."/>
            <person name="Hackett J."/>
            <person name="Klink S."/>
            <person name="Boutin A."/>
            <person name="Shao Y."/>
            <person name="Miller L."/>
            <person name="Grotbeck E.J."/>
            <person name="Davis N.W."/>
            <person name="Lim A."/>
            <person name="Dimalanta E.T."/>
            <person name="Potamousis K."/>
            <person name="Apodaca J."/>
            <person name="Anantharaman T.S."/>
            <person name="Lin J."/>
            <person name="Yen G."/>
            <person name="Schwartz D.C."/>
            <person name="Welch R.A."/>
            <person name="Blattner F.R."/>
        </authorList>
    </citation>
    <scope>NUCLEOTIDE SEQUENCE [LARGE SCALE GENOMIC DNA]</scope>
    <source>
        <strain>O157:H7 / EDL933 / ATCC 700927 / EHEC</strain>
    </source>
</reference>
<reference key="2">
    <citation type="journal article" date="2001" name="DNA Res.">
        <title>Complete genome sequence of enterohemorrhagic Escherichia coli O157:H7 and genomic comparison with a laboratory strain K-12.</title>
        <authorList>
            <person name="Hayashi T."/>
            <person name="Makino K."/>
            <person name="Ohnishi M."/>
            <person name="Kurokawa K."/>
            <person name="Ishii K."/>
            <person name="Yokoyama K."/>
            <person name="Han C.-G."/>
            <person name="Ohtsubo E."/>
            <person name="Nakayama K."/>
            <person name="Murata T."/>
            <person name="Tanaka M."/>
            <person name="Tobe T."/>
            <person name="Iida T."/>
            <person name="Takami H."/>
            <person name="Honda T."/>
            <person name="Sasakawa C."/>
            <person name="Ogasawara N."/>
            <person name="Yasunaga T."/>
            <person name="Kuhara S."/>
            <person name="Shiba T."/>
            <person name="Hattori M."/>
            <person name="Shinagawa H."/>
        </authorList>
    </citation>
    <scope>NUCLEOTIDE SEQUENCE [LARGE SCALE GENOMIC DNA]</scope>
    <source>
        <strain>O157:H7 / Sakai / RIMD 0509952 / EHEC</strain>
    </source>
</reference>